<reference key="1">
    <citation type="journal article" date="1996" name="DNA Res.">
        <title>Sequence analysis of the genome of the unicellular cyanobacterium Synechocystis sp. strain PCC6803. II. Sequence determination of the entire genome and assignment of potential protein-coding regions.</title>
        <authorList>
            <person name="Kaneko T."/>
            <person name="Sato S."/>
            <person name="Kotani H."/>
            <person name="Tanaka A."/>
            <person name="Asamizu E."/>
            <person name="Nakamura Y."/>
            <person name="Miyajima N."/>
            <person name="Hirosawa M."/>
            <person name="Sugiura M."/>
            <person name="Sasamoto S."/>
            <person name="Kimura T."/>
            <person name="Hosouchi T."/>
            <person name="Matsuno A."/>
            <person name="Muraki A."/>
            <person name="Nakazaki N."/>
            <person name="Naruo K."/>
            <person name="Okumura S."/>
            <person name="Shimpo S."/>
            <person name="Takeuchi C."/>
            <person name="Wada T."/>
            <person name="Watanabe A."/>
            <person name="Yamada M."/>
            <person name="Yasuda M."/>
            <person name="Tabata S."/>
        </authorList>
    </citation>
    <scope>NUCLEOTIDE SEQUENCE [LARGE SCALE GENOMIC DNA]</scope>
    <source>
        <strain>ATCC 27184 / PCC 6803 / Kazusa</strain>
    </source>
</reference>
<accession>P74564</accession>
<keyword id="KW-0002">3D-structure</keyword>
<keyword id="KW-0472">Membrane</keyword>
<keyword id="KW-0602">Photosynthesis</keyword>
<keyword id="KW-0603">Photosystem I</keyword>
<keyword id="KW-1185">Reference proteome</keyword>
<keyword id="KW-0793">Thylakoid</keyword>
<keyword id="KW-0812">Transmembrane</keyword>
<keyword id="KW-1133">Transmembrane helix</keyword>
<evidence type="ECO:0000250" key="1"/>
<evidence type="ECO:0000255" key="2"/>
<evidence type="ECO:0000305" key="3"/>
<evidence type="ECO:0007829" key="4">
    <source>
        <dbReference type="PDB" id="4KT0"/>
    </source>
</evidence>
<evidence type="ECO:0007829" key="5">
    <source>
        <dbReference type="PDB" id="6UZV"/>
    </source>
</evidence>
<organism>
    <name type="scientific">Synechocystis sp. (strain ATCC 27184 / PCC 6803 / Kazusa)</name>
    <dbReference type="NCBI Taxonomy" id="1111708"/>
    <lineage>
        <taxon>Bacteria</taxon>
        <taxon>Bacillati</taxon>
        <taxon>Cyanobacteriota</taxon>
        <taxon>Cyanophyceae</taxon>
        <taxon>Synechococcales</taxon>
        <taxon>Merismopediaceae</taxon>
        <taxon>Synechocystis</taxon>
    </lineage>
</organism>
<protein>
    <recommendedName>
        <fullName>Photosystem I reaction center subunit PsaK 2</fullName>
    </recommendedName>
    <alternativeName>
        <fullName>Photosystem I subunit X 2</fullName>
    </alternativeName>
</protein>
<sequence length="90" mass="9306">MFNTALLLAQASPTTAGWSLSVGIIMCLCNVFAFVIGYFAIQKTGKGKDLALPQLASKKTFGLPELLATMSFGHILGAGMVLGLASSGIL</sequence>
<name>PSAK2_SYNY3</name>
<feature type="propeptide" id="PRO_0000029410" evidence="2">
    <location>
        <begin position="1"/>
        <end status="unknown"/>
    </location>
</feature>
<feature type="chain" id="PRO_0000029411" description="Photosystem I reaction center subunit PsaK 2">
    <location>
        <begin status="unknown"/>
        <end position="90"/>
    </location>
</feature>
<feature type="transmembrane region" description="Helical" evidence="2">
    <location>
        <begin position="20"/>
        <end position="42"/>
    </location>
</feature>
<feature type="transmembrane region" description="Helical" evidence="2">
    <location>
        <begin position="67"/>
        <end position="89"/>
    </location>
</feature>
<feature type="helix" evidence="4">
    <location>
        <begin position="18"/>
        <end position="37"/>
    </location>
</feature>
<feature type="helix" evidence="5">
    <location>
        <begin position="53"/>
        <end position="57"/>
    </location>
</feature>
<feature type="helix" evidence="4">
    <location>
        <begin position="64"/>
        <end position="66"/>
    </location>
</feature>
<feature type="helix" evidence="4">
    <location>
        <begin position="67"/>
        <end position="88"/>
    </location>
</feature>
<proteinExistence type="evidence at protein level"/>
<dbReference type="EMBL" id="BA000022">
    <property type="protein sequence ID" value="BAA18671.1"/>
    <property type="status" value="ALT_INIT"/>
    <property type="molecule type" value="Genomic_DNA"/>
</dbReference>
<dbReference type="PIR" id="S76759">
    <property type="entry name" value="S76759"/>
</dbReference>
<dbReference type="PDB" id="4KT0">
    <property type="method" value="X-ray"/>
    <property type="resolution" value="2.80 A"/>
    <property type="chains" value="K=1-90"/>
</dbReference>
<dbReference type="PDB" id="4L6V">
    <property type="method" value="X-ray"/>
    <property type="resolution" value="3.80 A"/>
    <property type="chains" value="0/K/k=1-90"/>
</dbReference>
<dbReference type="PDB" id="6HQB">
    <property type="method" value="X-ray"/>
    <property type="resolution" value="4.00 A"/>
    <property type="chains" value="K=18-87"/>
</dbReference>
<dbReference type="PDB" id="6UZV">
    <property type="method" value="EM"/>
    <property type="resolution" value="3.10 A"/>
    <property type="chains" value="8/K/k=1-90"/>
</dbReference>
<dbReference type="PDB" id="7O1V">
    <property type="method" value="EM"/>
    <property type="resolution" value="4.31 A"/>
    <property type="chains" value="K=8-87"/>
</dbReference>
<dbReference type="PDB" id="9AU4">
    <property type="method" value="EM"/>
    <property type="resolution" value="2.03 A"/>
    <property type="chains" value="K/T/k=1-90"/>
</dbReference>
<dbReference type="PDBsum" id="4KT0"/>
<dbReference type="PDBsum" id="4L6V"/>
<dbReference type="PDBsum" id="6HQB"/>
<dbReference type="PDBsum" id="6UZV"/>
<dbReference type="PDBsum" id="7O1V"/>
<dbReference type="PDBsum" id="9AU4"/>
<dbReference type="EMDB" id="EMD-12697"/>
<dbReference type="EMDB" id="EMD-20963"/>
<dbReference type="EMDB" id="EMD-43843"/>
<dbReference type="SMR" id="P74564"/>
<dbReference type="STRING" id="1148.gene:10500437"/>
<dbReference type="PaxDb" id="1148-1653760"/>
<dbReference type="EnsemblBacteria" id="BAA18671">
    <property type="protein sequence ID" value="BAA18671"/>
    <property type="gene ID" value="BAA18671"/>
</dbReference>
<dbReference type="KEGG" id="syn:sll0629"/>
<dbReference type="eggNOG" id="ENOG503323W">
    <property type="taxonomic scope" value="Bacteria"/>
</dbReference>
<dbReference type="InParanoid" id="P74564"/>
<dbReference type="BioCyc" id="MetaCyc:MONOMER-16589"/>
<dbReference type="EvolutionaryTrace" id="P74564"/>
<dbReference type="Proteomes" id="UP000001425">
    <property type="component" value="Chromosome"/>
</dbReference>
<dbReference type="GO" id="GO:0009522">
    <property type="term" value="C:photosystem I"/>
    <property type="evidence" value="ECO:0007669"/>
    <property type="project" value="UniProtKB-KW"/>
</dbReference>
<dbReference type="GO" id="GO:0031676">
    <property type="term" value="C:plasma membrane-derived thylakoid membrane"/>
    <property type="evidence" value="ECO:0007669"/>
    <property type="project" value="UniProtKB-SubCell"/>
</dbReference>
<dbReference type="GO" id="GO:0015979">
    <property type="term" value="P:photosynthesis"/>
    <property type="evidence" value="ECO:0007669"/>
    <property type="project" value="UniProtKB-UniRule"/>
</dbReference>
<dbReference type="Gene3D" id="1.20.860.20">
    <property type="entry name" value="Photosystem I PsaK, reaction centre"/>
    <property type="match status" value="1"/>
</dbReference>
<dbReference type="HAMAP" id="MF_00474">
    <property type="entry name" value="PSI_PsaK"/>
    <property type="match status" value="1"/>
</dbReference>
<dbReference type="InterPro" id="IPR035982">
    <property type="entry name" value="PSI_centre_PsaK_sf"/>
</dbReference>
<dbReference type="InterPro" id="IPR000549">
    <property type="entry name" value="PSI_PsaG/PsaK"/>
</dbReference>
<dbReference type="InterPro" id="IPR017492">
    <property type="entry name" value="PSI_PsaK"/>
</dbReference>
<dbReference type="InterPro" id="IPR037101">
    <property type="entry name" value="PSI_PsaK_bact"/>
</dbReference>
<dbReference type="NCBIfam" id="TIGR03049">
    <property type="entry name" value="PS_I_psaK"/>
    <property type="match status" value="1"/>
</dbReference>
<dbReference type="Pfam" id="PF01241">
    <property type="entry name" value="PSI_PSAK"/>
    <property type="match status" value="1"/>
</dbReference>
<dbReference type="SUPFAM" id="SSF81563">
    <property type="entry name" value="Photosystem I reaction center subunit X, PsaK"/>
    <property type="match status" value="1"/>
</dbReference>
<dbReference type="PROSITE" id="PS01026">
    <property type="entry name" value="PHOTOSYSTEM_I_PSAGK"/>
    <property type="match status" value="1"/>
</dbReference>
<comment type="subcellular location">
    <subcellularLocation>
        <location evidence="1">Cellular thylakoid membrane</location>
        <topology evidence="1">Multi-pass membrane protein</topology>
    </subcellularLocation>
</comment>
<comment type="similarity">
    <text evidence="3">Belongs to the PsaG/PsaK family.</text>
</comment>
<comment type="sequence caution" evidence="3">
    <conflict type="erroneous initiation">
        <sequence resource="EMBL-CDS" id="BAA18671"/>
    </conflict>
    <text>Extended N-terminus.</text>
</comment>
<gene>
    <name type="primary">psaK2</name>
    <name type="ordered locus">sll0629</name>
</gene>